<protein>
    <recommendedName>
        <fullName>17.6 kDa class I heat shock protein 3</fullName>
    </recommendedName>
    <alternativeName>
        <fullName>17.6 kDa heat shock protein 3</fullName>
        <shortName>AtHsp17.6C</shortName>
    </alternativeName>
</protein>
<reference key="1">
    <citation type="journal article" date="1989" name="Nucleic Acids Res.">
        <title>An Arabidopsis thaliana cDNA clone encoding a low molecular weight heat shock protein.</title>
        <authorList>
            <person name="Helm K.W."/>
            <person name="Vierling E."/>
        </authorList>
    </citation>
    <scope>NUCLEOTIDE SEQUENCE [MRNA]</scope>
    <source>
        <strain>cv. Columbia</strain>
        <tissue>Leaf</tissue>
    </source>
</reference>
<reference key="2">
    <citation type="journal article" date="2000" name="Nature">
        <title>Sequence and analysis of chromosome 1 of the plant Arabidopsis thaliana.</title>
        <authorList>
            <person name="Theologis A."/>
            <person name="Ecker J.R."/>
            <person name="Palm C.J."/>
            <person name="Federspiel N.A."/>
            <person name="Kaul S."/>
            <person name="White O."/>
            <person name="Alonso J."/>
            <person name="Altafi H."/>
            <person name="Araujo R."/>
            <person name="Bowman C.L."/>
            <person name="Brooks S.Y."/>
            <person name="Buehler E."/>
            <person name="Chan A."/>
            <person name="Chao Q."/>
            <person name="Chen H."/>
            <person name="Cheuk R.F."/>
            <person name="Chin C.W."/>
            <person name="Chung M.K."/>
            <person name="Conn L."/>
            <person name="Conway A.B."/>
            <person name="Conway A.R."/>
            <person name="Creasy T.H."/>
            <person name="Dewar K."/>
            <person name="Dunn P."/>
            <person name="Etgu P."/>
            <person name="Feldblyum T.V."/>
            <person name="Feng J.-D."/>
            <person name="Fong B."/>
            <person name="Fujii C.Y."/>
            <person name="Gill J.E."/>
            <person name="Goldsmith A.D."/>
            <person name="Haas B."/>
            <person name="Hansen N.F."/>
            <person name="Hughes B."/>
            <person name="Huizar L."/>
            <person name="Hunter J.L."/>
            <person name="Jenkins J."/>
            <person name="Johnson-Hopson C."/>
            <person name="Khan S."/>
            <person name="Khaykin E."/>
            <person name="Kim C.J."/>
            <person name="Koo H.L."/>
            <person name="Kremenetskaia I."/>
            <person name="Kurtz D.B."/>
            <person name="Kwan A."/>
            <person name="Lam B."/>
            <person name="Langin-Hooper S."/>
            <person name="Lee A."/>
            <person name="Lee J.M."/>
            <person name="Lenz C.A."/>
            <person name="Li J.H."/>
            <person name="Li Y.-P."/>
            <person name="Lin X."/>
            <person name="Liu S.X."/>
            <person name="Liu Z.A."/>
            <person name="Luros J.S."/>
            <person name="Maiti R."/>
            <person name="Marziali A."/>
            <person name="Militscher J."/>
            <person name="Miranda M."/>
            <person name="Nguyen M."/>
            <person name="Nierman W.C."/>
            <person name="Osborne B.I."/>
            <person name="Pai G."/>
            <person name="Peterson J."/>
            <person name="Pham P.K."/>
            <person name="Rizzo M."/>
            <person name="Rooney T."/>
            <person name="Rowley D."/>
            <person name="Sakano H."/>
            <person name="Salzberg S.L."/>
            <person name="Schwartz J.R."/>
            <person name="Shinn P."/>
            <person name="Southwick A.M."/>
            <person name="Sun H."/>
            <person name="Tallon L.J."/>
            <person name="Tambunga G."/>
            <person name="Toriumi M.J."/>
            <person name="Town C.D."/>
            <person name="Utterback T."/>
            <person name="Van Aken S."/>
            <person name="Vaysberg M."/>
            <person name="Vysotskaia V.S."/>
            <person name="Walker M."/>
            <person name="Wu D."/>
            <person name="Yu G."/>
            <person name="Fraser C.M."/>
            <person name="Venter J.C."/>
            <person name="Davis R.W."/>
        </authorList>
    </citation>
    <scope>NUCLEOTIDE SEQUENCE [LARGE SCALE GENOMIC DNA]</scope>
    <source>
        <strain>cv. Columbia</strain>
    </source>
</reference>
<reference key="3">
    <citation type="journal article" date="2017" name="Plant J.">
        <title>Araport11: a complete reannotation of the Arabidopsis thaliana reference genome.</title>
        <authorList>
            <person name="Cheng C.Y."/>
            <person name="Krishnakumar V."/>
            <person name="Chan A.P."/>
            <person name="Thibaud-Nissen F."/>
            <person name="Schobel S."/>
            <person name="Town C.D."/>
        </authorList>
    </citation>
    <scope>GENOME REANNOTATION</scope>
    <source>
        <strain>cv. Columbia</strain>
    </source>
</reference>
<reference key="4">
    <citation type="submission" date="2006-02" db="EMBL/GenBank/DDBJ databases">
        <title>Arabidopsis ORF clones.</title>
        <authorList>
            <person name="Kim C.J."/>
            <person name="Chen H."/>
            <person name="Shinn P."/>
            <person name="Ecker J.R."/>
        </authorList>
    </citation>
    <scope>NUCLEOTIDE SEQUENCE [LARGE SCALE MRNA]</scope>
    <source>
        <strain>cv. Columbia</strain>
    </source>
</reference>
<sequence>MSLIPSIFGGRRTNVFDPFSLDVFDPFEGFLTPSGLANAPAMDVAAFTNAKVDWRETPEAHVFKADLPGLRKEEVKVEVEDGNILQISGERSNENEEKNDKWHRVERSSGKFTRRFRLPENAKMEEIKASMENGVLSVTVPKVPEKKPEVKSIDISG</sequence>
<gene>
    <name type="primary">HSP17.6C</name>
    <name type="ordered locus">At1g53540</name>
    <name type="ORF">F22G10.20</name>
</gene>
<dbReference type="EMBL" id="X16076">
    <property type="protein sequence ID" value="CAA34208.1"/>
    <property type="molecule type" value="mRNA"/>
</dbReference>
<dbReference type="EMBL" id="AC018748">
    <property type="protein sequence ID" value="AAF78436.1"/>
    <property type="status" value="ALT_SEQ"/>
    <property type="molecule type" value="Genomic_DNA"/>
</dbReference>
<dbReference type="EMBL" id="AC024260">
    <property type="protein sequence ID" value="AAG51972.1"/>
    <property type="molecule type" value="Genomic_DNA"/>
</dbReference>
<dbReference type="EMBL" id="CP002684">
    <property type="protein sequence ID" value="AEE32954.1"/>
    <property type="molecule type" value="Genomic_DNA"/>
</dbReference>
<dbReference type="EMBL" id="BT024697">
    <property type="protein sequence ID" value="ABD57522.1"/>
    <property type="molecule type" value="mRNA"/>
</dbReference>
<dbReference type="PIR" id="S06074">
    <property type="entry name" value="S06074"/>
</dbReference>
<dbReference type="RefSeq" id="NP_175759.1">
    <property type="nucleotide sequence ID" value="NM_104232.4"/>
</dbReference>
<dbReference type="SMR" id="P13853"/>
<dbReference type="FunCoup" id="P13853">
    <property type="interactions" value="208"/>
</dbReference>
<dbReference type="IntAct" id="P13853">
    <property type="interactions" value="1"/>
</dbReference>
<dbReference type="STRING" id="3702.P13853"/>
<dbReference type="PaxDb" id="3702-AT1G53540.1"/>
<dbReference type="ProteomicsDB" id="232103"/>
<dbReference type="EnsemblPlants" id="AT1G53540.1">
    <property type="protein sequence ID" value="AT1G53540.1"/>
    <property type="gene ID" value="AT1G53540"/>
</dbReference>
<dbReference type="GeneID" id="841789"/>
<dbReference type="Gramene" id="AT1G53540.1">
    <property type="protein sequence ID" value="AT1G53540.1"/>
    <property type="gene ID" value="AT1G53540"/>
</dbReference>
<dbReference type="KEGG" id="ath:AT1G53540"/>
<dbReference type="Araport" id="AT1G53540"/>
<dbReference type="TAIR" id="AT1G53540">
    <property type="gene designation" value="HSP17.6C"/>
</dbReference>
<dbReference type="eggNOG" id="KOG0710">
    <property type="taxonomic scope" value="Eukaryota"/>
</dbReference>
<dbReference type="HOGENOM" id="CLU_046737_5_0_1"/>
<dbReference type="InParanoid" id="P13853"/>
<dbReference type="OMA" id="KETATAY"/>
<dbReference type="PhylomeDB" id="P13853"/>
<dbReference type="PRO" id="PR:P13853"/>
<dbReference type="Proteomes" id="UP000006548">
    <property type="component" value="Chromosome 1"/>
</dbReference>
<dbReference type="ExpressionAtlas" id="P13853">
    <property type="expression patterns" value="baseline and differential"/>
</dbReference>
<dbReference type="GO" id="GO:0005737">
    <property type="term" value="C:cytoplasm"/>
    <property type="evidence" value="ECO:0007669"/>
    <property type="project" value="UniProtKB-SubCell"/>
</dbReference>
<dbReference type="CDD" id="cd06472">
    <property type="entry name" value="ACD_ScHsp26_like"/>
    <property type="match status" value="1"/>
</dbReference>
<dbReference type="FunFam" id="2.60.40.790:FF:000009">
    <property type="entry name" value="17.6 kDa class I heat shock protein-like"/>
    <property type="match status" value="1"/>
</dbReference>
<dbReference type="Gene3D" id="2.60.40.790">
    <property type="match status" value="1"/>
</dbReference>
<dbReference type="InterPro" id="IPR002068">
    <property type="entry name" value="A-crystallin/Hsp20_dom"/>
</dbReference>
<dbReference type="InterPro" id="IPR008978">
    <property type="entry name" value="HSP20-like_chaperone"/>
</dbReference>
<dbReference type="InterPro" id="IPR031107">
    <property type="entry name" value="Small_HSP"/>
</dbReference>
<dbReference type="PANTHER" id="PTHR11527">
    <property type="entry name" value="HEAT-SHOCK PROTEIN 20 FAMILY MEMBER"/>
    <property type="match status" value="1"/>
</dbReference>
<dbReference type="Pfam" id="PF00011">
    <property type="entry name" value="HSP20"/>
    <property type="match status" value="1"/>
</dbReference>
<dbReference type="SUPFAM" id="SSF49764">
    <property type="entry name" value="HSP20-like chaperones"/>
    <property type="match status" value="1"/>
</dbReference>
<dbReference type="PROSITE" id="PS01031">
    <property type="entry name" value="SHSP"/>
    <property type="match status" value="1"/>
</dbReference>
<organism>
    <name type="scientific">Arabidopsis thaliana</name>
    <name type="common">Mouse-ear cress</name>
    <dbReference type="NCBI Taxonomy" id="3702"/>
    <lineage>
        <taxon>Eukaryota</taxon>
        <taxon>Viridiplantae</taxon>
        <taxon>Streptophyta</taxon>
        <taxon>Embryophyta</taxon>
        <taxon>Tracheophyta</taxon>
        <taxon>Spermatophyta</taxon>
        <taxon>Magnoliopsida</taxon>
        <taxon>eudicotyledons</taxon>
        <taxon>Gunneridae</taxon>
        <taxon>Pentapetalae</taxon>
        <taxon>rosids</taxon>
        <taxon>malvids</taxon>
        <taxon>Brassicales</taxon>
        <taxon>Brassicaceae</taxon>
        <taxon>Camelineae</taxon>
        <taxon>Arabidopsis</taxon>
    </lineage>
</organism>
<comment type="subunit">
    <text>May form oligomeric structures.</text>
</comment>
<comment type="subcellular location">
    <subcellularLocation>
        <location evidence="2">Cytoplasm</location>
    </subcellularLocation>
</comment>
<comment type="similarity">
    <text evidence="1">Belongs to the small heat shock protein (HSP20) family.</text>
</comment>
<comment type="sequence caution" evidence="2">
    <conflict type="erroneous gene model prediction">
        <sequence resource="EMBL-CDS" id="AAF78436"/>
    </conflict>
    <text>The predicted gene At1g53540 has been split into 2 genes: At1g53530 and At1g53540.</text>
</comment>
<name>HS17C_ARATH</name>
<proteinExistence type="evidence at transcript level"/>
<feature type="chain" id="PRO_0000125971" description="17.6 kDa class I heat shock protein 3">
    <location>
        <begin position="1"/>
        <end position="157"/>
    </location>
</feature>
<feature type="domain" description="sHSP" evidence="1">
    <location>
        <begin position="43"/>
        <end position="157"/>
    </location>
</feature>
<evidence type="ECO:0000255" key="1">
    <source>
        <dbReference type="PROSITE-ProRule" id="PRU00285"/>
    </source>
</evidence>
<evidence type="ECO:0000305" key="2"/>
<keyword id="KW-0963">Cytoplasm</keyword>
<keyword id="KW-1185">Reference proteome</keyword>
<keyword id="KW-0346">Stress response</keyword>
<accession>P13853</accession>
<accession>Q29Q59</accession>
<accession>Q9C8L3</accession>
<accession>Q9LPG9</accession>